<accession>Q7NBC0</accession>
<feature type="chain" id="PRO_0000177180" description="Large ribosomal subunit protein bL20">
    <location>
        <begin position="1"/>
        <end position="115"/>
    </location>
</feature>
<proteinExistence type="inferred from homology"/>
<evidence type="ECO:0000255" key="1">
    <source>
        <dbReference type="HAMAP-Rule" id="MF_00382"/>
    </source>
</evidence>
<evidence type="ECO:0000305" key="2"/>
<protein>
    <recommendedName>
        <fullName evidence="1">Large ribosomal subunit protein bL20</fullName>
    </recommendedName>
    <alternativeName>
        <fullName evidence="2">50S ribosomal protein L20</fullName>
    </alternativeName>
</protein>
<comment type="function">
    <text evidence="1">Binds directly to 23S ribosomal RNA and is necessary for the in vitro assembly process of the 50S ribosomal subunit. It is not involved in the protein synthesizing functions of that subunit.</text>
</comment>
<comment type="similarity">
    <text evidence="1">Belongs to the bacterial ribosomal protein bL20 family.</text>
</comment>
<name>RL20_MYCGA</name>
<organism>
    <name type="scientific">Mycoplasmoides gallisepticum (strain R(low / passage 15 / clone 2))</name>
    <name type="common">Mycoplasma gallisepticum</name>
    <dbReference type="NCBI Taxonomy" id="710127"/>
    <lineage>
        <taxon>Bacteria</taxon>
        <taxon>Bacillati</taxon>
        <taxon>Mycoplasmatota</taxon>
        <taxon>Mycoplasmoidales</taxon>
        <taxon>Mycoplasmoidaceae</taxon>
        <taxon>Mycoplasmoides</taxon>
    </lineage>
</organism>
<keyword id="KW-1185">Reference proteome</keyword>
<keyword id="KW-0687">Ribonucleoprotein</keyword>
<keyword id="KW-0689">Ribosomal protein</keyword>
<keyword id="KW-0694">RNA-binding</keyword>
<keyword id="KW-0699">rRNA-binding</keyword>
<sequence>MRVKGGPTTRRRRKKWLNQAEGTFGTRHASYKVAKQTVIKSAKYAFRDRKNKKREFRALWIQRLNGALRELGVTYSVFINLLKKQQITINRKMLSEIAIHDHEAFKKLVKEVTGK</sequence>
<reference key="1">
    <citation type="journal article" date="2003" name="Microbiology">
        <title>The complete genome sequence of the avian pathogen Mycoplasma gallisepticum strain R(low).</title>
        <authorList>
            <person name="Papazisi L."/>
            <person name="Gorton T.S."/>
            <person name="Kutish G."/>
            <person name="Markham P.F."/>
            <person name="Browning G.F."/>
            <person name="Nguyen D.K."/>
            <person name="Swartzell S."/>
            <person name="Madan A."/>
            <person name="Mahairas G."/>
            <person name="Geary S.J."/>
        </authorList>
    </citation>
    <scope>NUCLEOTIDE SEQUENCE [LARGE SCALE GENOMIC DNA]</scope>
    <source>
        <strain>R(low / passage 15 / clone 2)</strain>
    </source>
</reference>
<dbReference type="EMBL" id="AE015450">
    <property type="protein sequence ID" value="AAP56709.1"/>
    <property type="molecule type" value="Genomic_DNA"/>
</dbReference>
<dbReference type="RefSeq" id="WP_011113605.1">
    <property type="nucleotide sequence ID" value="NC_004829.2"/>
</dbReference>
<dbReference type="SMR" id="Q7NBC0"/>
<dbReference type="GeneID" id="93510191"/>
<dbReference type="KEGG" id="mga:MGA_1274"/>
<dbReference type="HOGENOM" id="CLU_123265_0_1_14"/>
<dbReference type="OrthoDB" id="9808966at2"/>
<dbReference type="Proteomes" id="UP000001418">
    <property type="component" value="Chromosome"/>
</dbReference>
<dbReference type="GO" id="GO:1990904">
    <property type="term" value="C:ribonucleoprotein complex"/>
    <property type="evidence" value="ECO:0007669"/>
    <property type="project" value="UniProtKB-KW"/>
</dbReference>
<dbReference type="GO" id="GO:0005840">
    <property type="term" value="C:ribosome"/>
    <property type="evidence" value="ECO:0007669"/>
    <property type="project" value="UniProtKB-KW"/>
</dbReference>
<dbReference type="GO" id="GO:0019843">
    <property type="term" value="F:rRNA binding"/>
    <property type="evidence" value="ECO:0007669"/>
    <property type="project" value="UniProtKB-UniRule"/>
</dbReference>
<dbReference type="GO" id="GO:0003735">
    <property type="term" value="F:structural constituent of ribosome"/>
    <property type="evidence" value="ECO:0007669"/>
    <property type="project" value="InterPro"/>
</dbReference>
<dbReference type="GO" id="GO:0000027">
    <property type="term" value="P:ribosomal large subunit assembly"/>
    <property type="evidence" value="ECO:0007669"/>
    <property type="project" value="UniProtKB-UniRule"/>
</dbReference>
<dbReference type="GO" id="GO:0006412">
    <property type="term" value="P:translation"/>
    <property type="evidence" value="ECO:0007669"/>
    <property type="project" value="InterPro"/>
</dbReference>
<dbReference type="CDD" id="cd07026">
    <property type="entry name" value="Ribosomal_L20"/>
    <property type="match status" value="1"/>
</dbReference>
<dbReference type="FunFam" id="1.10.1900.20:FF:000001">
    <property type="entry name" value="50S ribosomal protein L20"/>
    <property type="match status" value="1"/>
</dbReference>
<dbReference type="Gene3D" id="6.10.160.10">
    <property type="match status" value="1"/>
</dbReference>
<dbReference type="Gene3D" id="1.10.1900.20">
    <property type="entry name" value="Ribosomal protein L20"/>
    <property type="match status" value="1"/>
</dbReference>
<dbReference type="HAMAP" id="MF_00382">
    <property type="entry name" value="Ribosomal_bL20"/>
    <property type="match status" value="1"/>
</dbReference>
<dbReference type="InterPro" id="IPR005813">
    <property type="entry name" value="Ribosomal_bL20"/>
</dbReference>
<dbReference type="InterPro" id="IPR049946">
    <property type="entry name" value="RIBOSOMAL_L20_CS"/>
</dbReference>
<dbReference type="InterPro" id="IPR035566">
    <property type="entry name" value="Ribosomal_protein_bL20_C"/>
</dbReference>
<dbReference type="NCBIfam" id="TIGR01032">
    <property type="entry name" value="rplT_bact"/>
    <property type="match status" value="1"/>
</dbReference>
<dbReference type="PANTHER" id="PTHR10986">
    <property type="entry name" value="39S RIBOSOMAL PROTEIN L20"/>
    <property type="match status" value="1"/>
</dbReference>
<dbReference type="Pfam" id="PF00453">
    <property type="entry name" value="Ribosomal_L20"/>
    <property type="match status" value="1"/>
</dbReference>
<dbReference type="PRINTS" id="PR00062">
    <property type="entry name" value="RIBOSOMALL20"/>
</dbReference>
<dbReference type="SUPFAM" id="SSF74731">
    <property type="entry name" value="Ribosomal protein L20"/>
    <property type="match status" value="1"/>
</dbReference>
<dbReference type="PROSITE" id="PS00937">
    <property type="entry name" value="RIBOSOMAL_L20"/>
    <property type="match status" value="1"/>
</dbReference>
<gene>
    <name evidence="1" type="primary">rplT</name>
    <name evidence="1" type="synonym">rpl20</name>
    <name type="ordered locus">MYCGA3590</name>
    <name type="ORF">MGA_1274</name>
</gene>